<feature type="chain" id="PRO_0000413377" description="Probable cyclic nucleotide phosphodiesterase RPA0124">
    <location>
        <begin position="1"/>
        <end position="274"/>
    </location>
</feature>
<feature type="binding site" evidence="2">
    <location>
        <position position="8"/>
    </location>
    <ligand>
        <name>Fe cation</name>
        <dbReference type="ChEBI" id="CHEBI:24875"/>
        <label>1</label>
    </ligand>
</feature>
<feature type="binding site" evidence="1">
    <location>
        <position position="10"/>
    </location>
    <ligand>
        <name>AMP</name>
        <dbReference type="ChEBI" id="CHEBI:456215"/>
    </ligand>
</feature>
<feature type="binding site" evidence="2">
    <location>
        <position position="10"/>
    </location>
    <ligand>
        <name>Fe cation</name>
        <dbReference type="ChEBI" id="CHEBI:24875"/>
        <label>1</label>
    </ligand>
</feature>
<feature type="binding site" evidence="1">
    <location>
        <position position="49"/>
    </location>
    <ligand>
        <name>AMP</name>
        <dbReference type="ChEBI" id="CHEBI:456215"/>
    </ligand>
</feature>
<feature type="binding site" evidence="2">
    <location>
        <position position="49"/>
    </location>
    <ligand>
        <name>Fe cation</name>
        <dbReference type="ChEBI" id="CHEBI:24875"/>
        <label>1</label>
    </ligand>
</feature>
<feature type="binding site" evidence="2">
    <location>
        <position position="49"/>
    </location>
    <ligand>
        <name>Fe cation</name>
        <dbReference type="ChEBI" id="CHEBI:24875"/>
        <label>2</label>
    </ligand>
</feature>
<feature type="binding site" evidence="1">
    <location>
        <begin position="79"/>
        <end position="80"/>
    </location>
    <ligand>
        <name>AMP</name>
        <dbReference type="ChEBI" id="CHEBI:456215"/>
    </ligand>
</feature>
<feature type="binding site" evidence="2">
    <location>
        <position position="79"/>
    </location>
    <ligand>
        <name>Fe cation</name>
        <dbReference type="ChEBI" id="CHEBI:24875"/>
        <label>2</label>
    </ligand>
</feature>
<feature type="binding site" evidence="2">
    <location>
        <position position="155"/>
    </location>
    <ligand>
        <name>Fe cation</name>
        <dbReference type="ChEBI" id="CHEBI:24875"/>
        <label>2</label>
    </ligand>
</feature>
<feature type="binding site" evidence="2">
    <location>
        <position position="194"/>
    </location>
    <ligand>
        <name>Fe cation</name>
        <dbReference type="ChEBI" id="CHEBI:24875"/>
        <label>2</label>
    </ligand>
</feature>
<feature type="binding site" evidence="1">
    <location>
        <position position="196"/>
    </location>
    <ligand>
        <name>AMP</name>
        <dbReference type="ChEBI" id="CHEBI:456215"/>
    </ligand>
</feature>
<feature type="binding site" evidence="2">
    <location>
        <position position="196"/>
    </location>
    <ligand>
        <name>Fe cation</name>
        <dbReference type="ChEBI" id="CHEBI:24875"/>
        <label>1</label>
    </ligand>
</feature>
<protein>
    <recommendedName>
        <fullName evidence="1">Probable cyclic nucleotide phosphodiesterase RPA0124</fullName>
        <ecNumber evidence="1">3.1.4.-</ecNumber>
    </recommendedName>
</protein>
<evidence type="ECO:0000250" key="1">
    <source>
        <dbReference type="UniProtKB" id="P9WP65"/>
    </source>
</evidence>
<evidence type="ECO:0000250" key="2">
    <source>
        <dbReference type="UniProtKB" id="Q6XBH1"/>
    </source>
</evidence>
<evidence type="ECO:0000305" key="3"/>
<reference key="1">
    <citation type="journal article" date="2004" name="Nat. Biotechnol.">
        <title>Complete genome sequence of the metabolically versatile photosynthetic bacterium Rhodopseudomonas palustris.</title>
        <authorList>
            <person name="Larimer F.W."/>
            <person name="Chain P."/>
            <person name="Hauser L."/>
            <person name="Lamerdin J.E."/>
            <person name="Malfatti S."/>
            <person name="Do L."/>
            <person name="Land M.L."/>
            <person name="Pelletier D.A."/>
            <person name="Beatty J.T."/>
            <person name="Lang A.S."/>
            <person name="Tabita F.R."/>
            <person name="Gibson J.L."/>
            <person name="Hanson T.E."/>
            <person name="Bobst C."/>
            <person name="Torres y Torres J.L."/>
            <person name="Peres C."/>
            <person name="Harrison F.H."/>
            <person name="Gibson J."/>
            <person name="Harwood C.S."/>
        </authorList>
    </citation>
    <scope>NUCLEOTIDE SEQUENCE [LARGE SCALE GENOMIC DNA]</scope>
    <source>
        <strain>ATCC BAA-98 / CGA009</strain>
    </source>
</reference>
<name>CNPD3_RHOPA</name>
<dbReference type="EC" id="3.1.4.-" evidence="1"/>
<dbReference type="EMBL" id="BX572593">
    <property type="protein sequence ID" value="CAE25568.1"/>
    <property type="molecule type" value="Genomic_DNA"/>
</dbReference>
<dbReference type="RefSeq" id="WP_011155692.1">
    <property type="nucleotide sequence ID" value="NZ_CP116810.1"/>
</dbReference>
<dbReference type="SMR" id="Q6NDI4"/>
<dbReference type="STRING" id="258594.RPA0124"/>
<dbReference type="GeneID" id="66891126"/>
<dbReference type="eggNOG" id="COG1409">
    <property type="taxonomic scope" value="Bacteria"/>
</dbReference>
<dbReference type="HOGENOM" id="CLU_070320_2_0_5"/>
<dbReference type="PhylomeDB" id="Q6NDI4"/>
<dbReference type="GO" id="GO:0004115">
    <property type="term" value="F:3',5'-cyclic-AMP phosphodiesterase activity"/>
    <property type="evidence" value="ECO:0007669"/>
    <property type="project" value="UniProtKB-EC"/>
</dbReference>
<dbReference type="GO" id="GO:0046872">
    <property type="term" value="F:metal ion binding"/>
    <property type="evidence" value="ECO:0007669"/>
    <property type="project" value="UniProtKB-KW"/>
</dbReference>
<dbReference type="GO" id="GO:0000166">
    <property type="term" value="F:nucleotide binding"/>
    <property type="evidence" value="ECO:0007669"/>
    <property type="project" value="UniProtKB-KW"/>
</dbReference>
<dbReference type="CDD" id="cd07402">
    <property type="entry name" value="MPP_GpdQ"/>
    <property type="match status" value="1"/>
</dbReference>
<dbReference type="Gene3D" id="3.60.21.10">
    <property type="match status" value="1"/>
</dbReference>
<dbReference type="InterPro" id="IPR004843">
    <property type="entry name" value="Calcineurin-like_PHP_ApaH"/>
</dbReference>
<dbReference type="InterPro" id="IPR050884">
    <property type="entry name" value="CNP_phosphodiesterase-III"/>
</dbReference>
<dbReference type="InterPro" id="IPR026575">
    <property type="entry name" value="GpdQ/CpdA-like"/>
</dbReference>
<dbReference type="InterPro" id="IPR029052">
    <property type="entry name" value="Metallo-depent_PP-like"/>
</dbReference>
<dbReference type="PANTHER" id="PTHR42988:SF2">
    <property type="entry name" value="CYCLIC NUCLEOTIDE PHOSPHODIESTERASE CBUA0032-RELATED"/>
    <property type="match status" value="1"/>
</dbReference>
<dbReference type="PANTHER" id="PTHR42988">
    <property type="entry name" value="PHOSPHOHYDROLASE"/>
    <property type="match status" value="1"/>
</dbReference>
<dbReference type="Pfam" id="PF00149">
    <property type="entry name" value="Metallophos"/>
    <property type="match status" value="1"/>
</dbReference>
<dbReference type="SUPFAM" id="SSF56300">
    <property type="entry name" value="Metallo-dependent phosphatases"/>
    <property type="match status" value="1"/>
</dbReference>
<comment type="cofactor">
    <cofactor evidence="2">
        <name>Fe(2+)</name>
        <dbReference type="ChEBI" id="CHEBI:29033"/>
    </cofactor>
    <text evidence="2">Binds 2 Fe(2+) ions per subunit.</text>
</comment>
<comment type="similarity">
    <text evidence="3">Belongs to the cyclic nucleotide phosphodiesterase class-III family.</text>
</comment>
<organism>
    <name type="scientific">Rhodopseudomonas palustris (strain ATCC BAA-98 / CGA009)</name>
    <dbReference type="NCBI Taxonomy" id="258594"/>
    <lineage>
        <taxon>Bacteria</taxon>
        <taxon>Pseudomonadati</taxon>
        <taxon>Pseudomonadota</taxon>
        <taxon>Alphaproteobacteria</taxon>
        <taxon>Hyphomicrobiales</taxon>
        <taxon>Nitrobacteraceae</taxon>
        <taxon>Rhodopseudomonas</taxon>
    </lineage>
</organism>
<keyword id="KW-0378">Hydrolase</keyword>
<keyword id="KW-0408">Iron</keyword>
<keyword id="KW-0479">Metal-binding</keyword>
<keyword id="KW-0547">Nucleotide-binding</keyword>
<gene>
    <name type="ordered locus">RPA0124</name>
</gene>
<proteinExistence type="inferred from homology"/>
<accession>Q6NDI4</accession>
<sequence>MKFVVLTDTHFVARGRRIYGLDPAERLSAAVARINREHPDIAFVIVTGDLAHWGEEPAYDNLASVLAGLRAPTILMMGNHDKREAFAKFFPGVPRDASGFVQTVQVFEAATIVTLDTLNEAAPNHEGFLCEARLAFLEHALAEAPADRPLLLFQHHPPFDTGLRYMDTIRLANPDAEWEVIARTRKPDYLFMGHLHRPISGVWRGIPFHIQRGLAHQVAFDLVAEGHIPGSHEPPDYAHVSVEADRIVIHQCSFMYDGPLFSLHDSVALHRVSF</sequence>